<accession>Q9FNB3</accession>
<keyword id="KW-0597">Phosphoprotein</keyword>
<keyword id="KW-1185">Reference proteome</keyword>
<keyword id="KW-0833">Ubl conjugation pathway</keyword>
<comment type="function">
    <text evidence="1">May act as a substrate-specific adapter of an E3 ubiquitin-protein ligase complex (CUL3-RBX1-BTB) which mediates the ubiquitination and subsequent proteasomal degradation of target proteins.</text>
</comment>
<comment type="pathway">
    <text>Protein modification; protein ubiquitination.</text>
</comment>
<comment type="domain">
    <text evidence="5">The BTB/POZ domain mediates the interaction with some component of ubiquitin ligase complexes.</text>
</comment>
<comment type="similarity">
    <text evidence="4">Belongs to the NPH3 family.</text>
</comment>
<dbReference type="EMBL" id="AB006704">
    <property type="protein sequence ID" value="BAB08686.1"/>
    <property type="molecule type" value="Genomic_DNA"/>
</dbReference>
<dbReference type="EMBL" id="CP002688">
    <property type="protein sequence ID" value="AED91916.1"/>
    <property type="molecule type" value="Genomic_DNA"/>
</dbReference>
<dbReference type="RefSeq" id="NP_196864.1">
    <property type="nucleotide sequence ID" value="NM_121363.1"/>
</dbReference>
<dbReference type="SMR" id="Q9FNB3"/>
<dbReference type="PaxDb" id="3702-AT5G13600.1"/>
<dbReference type="ProteomicsDB" id="243110"/>
<dbReference type="EnsemblPlants" id="AT5G13600.1">
    <property type="protein sequence ID" value="AT5G13600.1"/>
    <property type="gene ID" value="AT5G13600"/>
</dbReference>
<dbReference type="GeneID" id="831204"/>
<dbReference type="Gramene" id="AT5G13600.1">
    <property type="protein sequence ID" value="AT5G13600.1"/>
    <property type="gene ID" value="AT5G13600"/>
</dbReference>
<dbReference type="KEGG" id="ath:AT5G13600"/>
<dbReference type="Araport" id="AT5G13600"/>
<dbReference type="TAIR" id="AT5G13600"/>
<dbReference type="eggNOG" id="ENOG502QR2D">
    <property type="taxonomic scope" value="Eukaryota"/>
</dbReference>
<dbReference type="HOGENOM" id="CLU_005994_3_1_1"/>
<dbReference type="InParanoid" id="Q9FNB3"/>
<dbReference type="OMA" id="CEHKLIP"/>
<dbReference type="OrthoDB" id="624345at2759"/>
<dbReference type="PhylomeDB" id="Q9FNB3"/>
<dbReference type="UniPathway" id="UPA00143"/>
<dbReference type="PRO" id="PR:Q9FNB3"/>
<dbReference type="Proteomes" id="UP000006548">
    <property type="component" value="Chromosome 5"/>
</dbReference>
<dbReference type="ExpressionAtlas" id="Q9FNB3">
    <property type="expression patterns" value="baseline and differential"/>
</dbReference>
<dbReference type="GO" id="GO:0016567">
    <property type="term" value="P:protein ubiquitination"/>
    <property type="evidence" value="ECO:0007669"/>
    <property type="project" value="UniProtKB-UniPathway"/>
</dbReference>
<dbReference type="FunFam" id="3.30.710.10:FF:000168">
    <property type="entry name" value="BTB/POZ domain-containing protein At1g03010"/>
    <property type="match status" value="1"/>
</dbReference>
<dbReference type="Gene3D" id="3.30.710.10">
    <property type="entry name" value="Potassium Channel Kv1.1, Chain A"/>
    <property type="match status" value="1"/>
</dbReference>
<dbReference type="InterPro" id="IPR000210">
    <property type="entry name" value="BTB/POZ_dom"/>
</dbReference>
<dbReference type="InterPro" id="IPR043454">
    <property type="entry name" value="NPH3/RPT2-like"/>
</dbReference>
<dbReference type="InterPro" id="IPR027356">
    <property type="entry name" value="NPH3_dom"/>
</dbReference>
<dbReference type="InterPro" id="IPR011333">
    <property type="entry name" value="SKP1/BTB/POZ_sf"/>
</dbReference>
<dbReference type="PANTHER" id="PTHR32370">
    <property type="entry name" value="OS12G0117600 PROTEIN"/>
    <property type="match status" value="1"/>
</dbReference>
<dbReference type="Pfam" id="PF00651">
    <property type="entry name" value="BTB"/>
    <property type="match status" value="1"/>
</dbReference>
<dbReference type="Pfam" id="PF03000">
    <property type="entry name" value="NPH3"/>
    <property type="match status" value="1"/>
</dbReference>
<dbReference type="SMART" id="SM00225">
    <property type="entry name" value="BTB"/>
    <property type="match status" value="1"/>
</dbReference>
<dbReference type="SUPFAM" id="SSF54695">
    <property type="entry name" value="POZ domain"/>
    <property type="match status" value="1"/>
</dbReference>
<dbReference type="PROSITE" id="PS50097">
    <property type="entry name" value="BTB"/>
    <property type="match status" value="1"/>
</dbReference>
<dbReference type="PROSITE" id="PS51649">
    <property type="entry name" value="NPH3"/>
    <property type="match status" value="1"/>
</dbReference>
<organism>
    <name type="scientific">Arabidopsis thaliana</name>
    <name type="common">Mouse-ear cress</name>
    <dbReference type="NCBI Taxonomy" id="3702"/>
    <lineage>
        <taxon>Eukaryota</taxon>
        <taxon>Viridiplantae</taxon>
        <taxon>Streptophyta</taxon>
        <taxon>Embryophyta</taxon>
        <taxon>Tracheophyta</taxon>
        <taxon>Spermatophyta</taxon>
        <taxon>Magnoliopsida</taxon>
        <taxon>eudicotyledons</taxon>
        <taxon>Gunneridae</taxon>
        <taxon>Pentapetalae</taxon>
        <taxon>rosids</taxon>
        <taxon>malvids</taxon>
        <taxon>Brassicales</taxon>
        <taxon>Brassicaceae</taxon>
        <taxon>Camelineae</taxon>
        <taxon>Arabidopsis</taxon>
    </lineage>
</organism>
<evidence type="ECO:0000250" key="1"/>
<evidence type="ECO:0000250" key="2">
    <source>
        <dbReference type="UniProtKB" id="Q9FMF5"/>
    </source>
</evidence>
<evidence type="ECO:0000255" key="3">
    <source>
        <dbReference type="PROSITE-ProRule" id="PRU00037"/>
    </source>
</evidence>
<evidence type="ECO:0000255" key="4">
    <source>
        <dbReference type="PROSITE-ProRule" id="PRU00982"/>
    </source>
</evidence>
<evidence type="ECO:0000269" key="5">
    <source>
    </source>
</evidence>
<name>Y5360_ARATH</name>
<gene>
    <name type="ordered locus">At5g13600</name>
    <name type="ORF">T6I14.9</name>
</gene>
<sequence>MASLKLGSKSEVFHLSGHTWLCKTGLKPDVMIQVVDESFHLHKFPLLSRSGYLETLFSKASETTCVAQLHDIPGGPETFLLVAKFCYGVRIEVTPENAVSLRCAAEYLQMSENYGDANLIYLTESFLNDHVFVNWEDSIKALEKSCEPKVLPLAEELHIVSRCIGSLAMKACAEDNTSFFNWPISLPEGTTTTTIYWNGIQTKATSENWWFNDVSSFLDLPMYKRFIKTVESRGVNAGIIAASVTHYAKRNLPLLGCSRKSGSPSEEGTNYGDDMYYSHEEQRSLLEEIVELLPGKKCVTSTKFLLRLLRTSMVLHASQVTQETLEKRIGMQLDEAALEDLLIPNMKYSGETLYDTDSVQRILDHFMLTFDSSIVEEKQMMGDSHPLKSITKVASLIDGYLAEVASDENLKLSKFQALGALIPEDVRPMDDGIYRAIDIYIKAHPWLTESEREQLCLLMNCQKLSLEACTHAAQNERLPLRVIVQVLFFEQMRLRTSIAGWLFGSEENNDTSGALEGNKNTNANMVMHGMRERVFELEKECMSMKQDLDKLVKTKEGRNFFSKIFGSRSKTKTSPCGKGGEDALVIPETKN</sequence>
<protein>
    <recommendedName>
        <fullName>Putative BTB/POZ domain-containing protein At5g13600</fullName>
    </recommendedName>
</protein>
<proteinExistence type="inferred from homology"/>
<reference key="1">
    <citation type="journal article" date="1997" name="DNA Res.">
        <title>Structural analysis of Arabidopsis thaliana chromosome 5. II. Sequence features of the regions of 1,044,062 bp covered by thirteen physically assigned P1 clones.</title>
        <authorList>
            <person name="Kotani H."/>
            <person name="Nakamura Y."/>
            <person name="Sato S."/>
            <person name="Kaneko T."/>
            <person name="Asamizu E."/>
            <person name="Miyajima N."/>
            <person name="Tabata S."/>
        </authorList>
    </citation>
    <scope>NUCLEOTIDE SEQUENCE [LARGE SCALE GENOMIC DNA]</scope>
    <source>
        <strain>cv. Columbia</strain>
    </source>
</reference>
<reference key="2">
    <citation type="journal article" date="2017" name="Plant J.">
        <title>Araport11: a complete reannotation of the Arabidopsis thaliana reference genome.</title>
        <authorList>
            <person name="Cheng C.Y."/>
            <person name="Krishnakumar V."/>
            <person name="Chan A.P."/>
            <person name="Thibaud-Nissen F."/>
            <person name="Schobel S."/>
            <person name="Town C.D."/>
        </authorList>
    </citation>
    <scope>GENOME REANNOTATION</scope>
    <source>
        <strain>cv. Columbia</strain>
    </source>
</reference>
<reference key="3">
    <citation type="journal article" date="2005" name="J. Biol. Chem.">
        <title>Cullins 3a and 3b assemble with members of the broad complex/tramtrack/bric-a-brac (BTB) protein family to form essential ubiquitin-protein ligases (E3s) in Arabidopsis.</title>
        <authorList>
            <person name="Gingerich D.J."/>
            <person name="Gagne J.M."/>
            <person name="Salter D.W."/>
            <person name="Hellmann H."/>
            <person name="Estelle M."/>
            <person name="Ma L."/>
            <person name="Vierstra R.D."/>
        </authorList>
    </citation>
    <scope>DOMAIN BTB</scope>
</reference>
<feature type="chain" id="PRO_0000409583" description="Putative BTB/POZ domain-containing protein At5g13600">
    <location>
        <begin position="1"/>
        <end position="591"/>
    </location>
</feature>
<feature type="domain" description="BTB" evidence="3">
    <location>
        <begin position="28"/>
        <end position="95"/>
    </location>
</feature>
<feature type="domain" description="NPH3" evidence="4">
    <location>
        <begin position="208"/>
        <end position="493"/>
    </location>
</feature>
<feature type="modified residue" description="Phosphotyrosine" evidence="2">
    <location>
        <position position="434"/>
    </location>
</feature>